<organism>
    <name type="scientific">Rattus norvegicus</name>
    <name type="common">Rat</name>
    <dbReference type="NCBI Taxonomy" id="10116"/>
    <lineage>
        <taxon>Eukaryota</taxon>
        <taxon>Metazoa</taxon>
        <taxon>Chordata</taxon>
        <taxon>Craniata</taxon>
        <taxon>Vertebrata</taxon>
        <taxon>Euteleostomi</taxon>
        <taxon>Mammalia</taxon>
        <taxon>Eutheria</taxon>
        <taxon>Euarchontoglires</taxon>
        <taxon>Glires</taxon>
        <taxon>Rodentia</taxon>
        <taxon>Myomorpha</taxon>
        <taxon>Muroidea</taxon>
        <taxon>Muridae</taxon>
        <taxon>Murinae</taxon>
        <taxon>Rattus</taxon>
    </lineage>
</organism>
<gene>
    <name evidence="6" type="primary">Vtcn1</name>
</gene>
<evidence type="ECO:0000250" key="1">
    <source>
        <dbReference type="UniProtKB" id="Q5ZPR3"/>
    </source>
</evidence>
<evidence type="ECO:0000250" key="2">
    <source>
        <dbReference type="UniProtKB" id="Q7TSP5"/>
    </source>
</evidence>
<evidence type="ECO:0000250" key="3">
    <source>
        <dbReference type="UniProtKB" id="Q7Z7D3"/>
    </source>
</evidence>
<evidence type="ECO:0000255" key="4"/>
<evidence type="ECO:0000255" key="5">
    <source>
        <dbReference type="PROSITE-ProRule" id="PRU00114"/>
    </source>
</evidence>
<evidence type="ECO:0000312" key="6">
    <source>
        <dbReference type="EMBL" id="AAH95842.1"/>
    </source>
</evidence>
<proteinExistence type="evidence at transcript level"/>
<name>VTCN1_RAT</name>
<protein>
    <recommendedName>
        <fullName>V-set domain-containing T-cell activation inhibitor 1</fullName>
    </recommendedName>
</protein>
<reference evidence="6" key="1">
    <citation type="journal article" date="2004" name="Genome Res.">
        <title>The status, quality, and expansion of the NIH full-length cDNA project: the Mammalian Gene Collection (MGC).</title>
        <authorList>
            <consortium name="The MGC Project Team"/>
        </authorList>
    </citation>
    <scope>NUCLEOTIDE SEQUENCE [LARGE SCALE MRNA]</scope>
    <source>
        <tissue evidence="6">Thymus</tissue>
    </source>
</reference>
<dbReference type="EMBL" id="BC095842">
    <property type="protein sequence ID" value="AAH95842.1"/>
    <property type="molecule type" value="mRNA"/>
</dbReference>
<dbReference type="RefSeq" id="NP_001019415.1">
    <property type="nucleotide sequence ID" value="NM_001024244.1"/>
</dbReference>
<dbReference type="SMR" id="Q501W4"/>
<dbReference type="FunCoup" id="Q501W4">
    <property type="interactions" value="497"/>
</dbReference>
<dbReference type="STRING" id="10116.ENSRNOP00000020566"/>
<dbReference type="GlyCosmos" id="Q501W4">
    <property type="glycosylation" value="1 site, No reported glycans"/>
</dbReference>
<dbReference type="GlyGen" id="Q501W4">
    <property type="glycosylation" value="2 sites"/>
</dbReference>
<dbReference type="PhosphoSitePlus" id="Q501W4"/>
<dbReference type="PaxDb" id="10116-ENSRNOP00000020566"/>
<dbReference type="Ensembl" id="ENSRNOT00000020566.7">
    <property type="protein sequence ID" value="ENSRNOP00000020566.4"/>
    <property type="gene ID" value="ENSRNOG00000015279.7"/>
</dbReference>
<dbReference type="GeneID" id="295322"/>
<dbReference type="KEGG" id="rno:295322"/>
<dbReference type="UCSC" id="RGD:1311204">
    <property type="organism name" value="rat"/>
</dbReference>
<dbReference type="AGR" id="RGD:1311204"/>
<dbReference type="CTD" id="79679"/>
<dbReference type="RGD" id="1311204">
    <property type="gene designation" value="Vtcn1"/>
</dbReference>
<dbReference type="eggNOG" id="ENOG502S286">
    <property type="taxonomic scope" value="Eukaryota"/>
</dbReference>
<dbReference type="GeneTree" id="ENSGT00940000157300"/>
<dbReference type="HOGENOM" id="CLU_013137_8_6_1"/>
<dbReference type="InParanoid" id="Q501W4"/>
<dbReference type="OrthoDB" id="46366at9989"/>
<dbReference type="PhylomeDB" id="Q501W4"/>
<dbReference type="TreeFam" id="TF331083"/>
<dbReference type="PRO" id="PR:Q501W4"/>
<dbReference type="Proteomes" id="UP000002494">
    <property type="component" value="Chromosome 2"/>
</dbReference>
<dbReference type="Bgee" id="ENSRNOG00000015279">
    <property type="expression patterns" value="Expressed in ovary and 9 other cell types or tissues"/>
</dbReference>
<dbReference type="GO" id="GO:0009897">
    <property type="term" value="C:external side of plasma membrane"/>
    <property type="evidence" value="ECO:0000266"/>
    <property type="project" value="RGD"/>
</dbReference>
<dbReference type="GO" id="GO:0005102">
    <property type="term" value="F:signaling receptor binding"/>
    <property type="evidence" value="ECO:0000266"/>
    <property type="project" value="RGD"/>
</dbReference>
<dbReference type="GO" id="GO:0002250">
    <property type="term" value="P:adaptive immune response"/>
    <property type="evidence" value="ECO:0007669"/>
    <property type="project" value="UniProtKB-KW"/>
</dbReference>
<dbReference type="GO" id="GO:0043066">
    <property type="term" value="P:negative regulation of apoptotic process"/>
    <property type="evidence" value="ECO:0000266"/>
    <property type="project" value="RGD"/>
</dbReference>
<dbReference type="GO" id="GO:0050868">
    <property type="term" value="P:negative regulation of T cell activation"/>
    <property type="evidence" value="ECO:0000266"/>
    <property type="project" value="RGD"/>
</dbReference>
<dbReference type="GO" id="GO:0042130">
    <property type="term" value="P:negative regulation of T cell proliferation"/>
    <property type="evidence" value="ECO:0000266"/>
    <property type="project" value="RGD"/>
</dbReference>
<dbReference type="GO" id="GO:0032743">
    <property type="term" value="P:positive regulation of interleukin-2 production"/>
    <property type="evidence" value="ECO:0000266"/>
    <property type="project" value="RGD"/>
</dbReference>
<dbReference type="GO" id="GO:0042102">
    <property type="term" value="P:positive regulation of T cell proliferation"/>
    <property type="evidence" value="ECO:0000266"/>
    <property type="project" value="RGD"/>
</dbReference>
<dbReference type="GO" id="GO:0001817">
    <property type="term" value="P:regulation of cytokine production"/>
    <property type="evidence" value="ECO:0000318"/>
    <property type="project" value="GO_Central"/>
</dbReference>
<dbReference type="GO" id="GO:0001562">
    <property type="term" value="P:response to protozoan"/>
    <property type="evidence" value="ECO:0000266"/>
    <property type="project" value="RGD"/>
</dbReference>
<dbReference type="GO" id="GO:0050852">
    <property type="term" value="P:T cell receptor signaling pathway"/>
    <property type="evidence" value="ECO:0000318"/>
    <property type="project" value="GO_Central"/>
</dbReference>
<dbReference type="CDD" id="cd20984">
    <property type="entry name" value="IgV_B7-H4"/>
    <property type="match status" value="1"/>
</dbReference>
<dbReference type="FunFam" id="2.60.40.10:FF:000590">
    <property type="entry name" value="V-set domain-containing T cell activation inhibitor 1"/>
    <property type="match status" value="1"/>
</dbReference>
<dbReference type="FunFam" id="2.60.40.10:FF:000142">
    <property type="entry name" value="V-set domain-containing T-cell activation inhibitor 1"/>
    <property type="match status" value="1"/>
</dbReference>
<dbReference type="Gene3D" id="2.60.40.10">
    <property type="entry name" value="Immunoglobulins"/>
    <property type="match status" value="2"/>
</dbReference>
<dbReference type="InterPro" id="IPR053896">
    <property type="entry name" value="BTN3A2-like_Ig-C"/>
</dbReference>
<dbReference type="InterPro" id="IPR007110">
    <property type="entry name" value="Ig-like_dom"/>
</dbReference>
<dbReference type="InterPro" id="IPR036179">
    <property type="entry name" value="Ig-like_dom_sf"/>
</dbReference>
<dbReference type="InterPro" id="IPR013783">
    <property type="entry name" value="Ig-like_fold"/>
</dbReference>
<dbReference type="InterPro" id="IPR003599">
    <property type="entry name" value="Ig_sub"/>
</dbReference>
<dbReference type="InterPro" id="IPR013106">
    <property type="entry name" value="Ig_V-set"/>
</dbReference>
<dbReference type="InterPro" id="IPR050504">
    <property type="entry name" value="IgSF_BTN/MOG"/>
</dbReference>
<dbReference type="PANTHER" id="PTHR24100">
    <property type="entry name" value="BUTYROPHILIN"/>
    <property type="match status" value="1"/>
</dbReference>
<dbReference type="PANTHER" id="PTHR24100:SF0">
    <property type="entry name" value="V-SET DOMAIN-CONTAINING T-CELL ACTIVATION INHIBITOR 1"/>
    <property type="match status" value="1"/>
</dbReference>
<dbReference type="Pfam" id="PF22705">
    <property type="entry name" value="C2-set_3"/>
    <property type="match status" value="1"/>
</dbReference>
<dbReference type="Pfam" id="PF07686">
    <property type="entry name" value="V-set"/>
    <property type="match status" value="1"/>
</dbReference>
<dbReference type="SMART" id="SM00409">
    <property type="entry name" value="IG"/>
    <property type="match status" value="1"/>
</dbReference>
<dbReference type="SUPFAM" id="SSF48726">
    <property type="entry name" value="Immunoglobulin"/>
    <property type="match status" value="2"/>
</dbReference>
<dbReference type="PROSITE" id="PS50835">
    <property type="entry name" value="IG_LIKE"/>
    <property type="match status" value="2"/>
</dbReference>
<feature type="signal peptide" evidence="4">
    <location>
        <begin position="1"/>
        <end position="24"/>
    </location>
</feature>
<feature type="chain" id="PRO_0000339240" description="V-set domain-containing T-cell activation inhibitor 1" evidence="4">
    <location>
        <begin position="25"/>
        <end position="257"/>
    </location>
</feature>
<feature type="propeptide" id="PRO_0000339241" description="Removed in mature form" evidence="4">
    <location>
        <begin position="258"/>
        <end position="282"/>
    </location>
</feature>
<feature type="domain" description="Ig-like V-type 1" evidence="4">
    <location>
        <begin position="35"/>
        <end position="144"/>
    </location>
</feature>
<feature type="domain" description="Ig-like V-type 2" evidence="4">
    <location>
        <begin position="153"/>
        <end position="241"/>
    </location>
</feature>
<feature type="lipid moiety-binding region" description="GPI-anchor amidated glycine" evidence="4">
    <location>
        <position position="257"/>
    </location>
</feature>
<feature type="glycosylation site" description="N-linked (GlcNAc...) asparagine" evidence="4">
    <location>
        <position position="216"/>
    </location>
</feature>
<feature type="disulfide bond" evidence="5">
    <location>
        <begin position="56"/>
        <end position="130"/>
    </location>
</feature>
<feature type="disulfide bond" evidence="5">
    <location>
        <begin position="168"/>
        <end position="225"/>
    </location>
</feature>
<sequence length="282" mass="30664">MASLGQIIFWSIINVIIILAGAIVLIIGFGISGKHFITVTTFTSAGNIGEDGTLSCTFEPDIKLNGIVIQWLKEGIKGLVHEFKEGKDDLSQQHEMFRGRTAVFADQVVVGNASLRLKNVQLTDAGTYTCYIHTSKGKGNANLEYKTGAFSMPEINVDYNASSESLRCEAPRWFPQPTVAWASQVDQGANFSEVSNTSFELNSENVTMKVVSVLYNVTINNTYSCMIENDIAKATGDIKVTDSEVKRRSQLELLNSGPSPCVSSVSAAGWALLSLSCCLMLR</sequence>
<accession>Q501W4</accession>
<keyword id="KW-1064">Adaptive immunity</keyword>
<keyword id="KW-1003">Cell membrane</keyword>
<keyword id="KW-1015">Disulfide bond</keyword>
<keyword id="KW-0325">Glycoprotein</keyword>
<keyword id="KW-0336">GPI-anchor</keyword>
<keyword id="KW-0391">Immunity</keyword>
<keyword id="KW-0393">Immunoglobulin domain</keyword>
<keyword id="KW-0449">Lipoprotein</keyword>
<keyword id="KW-0472">Membrane</keyword>
<keyword id="KW-1185">Reference proteome</keyword>
<keyword id="KW-0677">Repeat</keyword>
<keyword id="KW-0732">Signal</keyword>
<comment type="function">
    <text evidence="2 3">Negatively regulates T-cell-mediated immune response by inhibiting T-cell activation, proliferation, cytokine production and development of cytotoxicity. When expressed on the cell surface of tumor macrophages, plays an important role, together with regulatory T-cells (Treg), in the suppression of tumor-associated antigen-specific T-cell immunity. Involved in promoting epithelial cell transformation (By similarity).</text>
</comment>
<comment type="subcellular location">
    <subcellularLocation>
        <location evidence="2">Cell membrane</location>
        <topology evidence="2">Lipid-anchor</topology>
        <topology evidence="2">GPI-anchor</topology>
    </subcellularLocation>
    <text evidence="2">Expressed at the cell surface. A soluble form has also been detected (By similarity).</text>
</comment>
<comment type="PTM">
    <text evidence="3">N-glycosylated.</text>
</comment>
<comment type="similarity">
    <text evidence="1">Belongs to the immunoglobulin superfamily. BTN/MOG family.</text>
</comment>